<evidence type="ECO:0000250" key="1">
    <source>
        <dbReference type="UniProtKB" id="P63030"/>
    </source>
</evidence>
<evidence type="ECO:0000255" key="2"/>
<evidence type="ECO:0000256" key="3">
    <source>
        <dbReference type="SAM" id="MobiDB-lite"/>
    </source>
</evidence>
<evidence type="ECO:0000305" key="4"/>
<name>MPCX_BOVIN</name>
<protein>
    <recommendedName>
        <fullName>Mitochondrial pyruvate carrier-like protein</fullName>
    </recommendedName>
    <alternativeName>
        <fullName>Brain protein 44-like protein 2</fullName>
    </alternativeName>
</protein>
<comment type="function">
    <text evidence="1">May mediate the uptake of pyruvate into mitochondria.</text>
</comment>
<comment type="subcellular location">
    <subcellularLocation>
        <location evidence="1">Mitochondrion inner membrane</location>
        <topology>Multi-pass membrane protein</topology>
    </subcellularLocation>
</comment>
<comment type="similarity">
    <text evidence="4">Belongs to the mitochondrial pyruvate carrier (MPC) (TC 2.A.105) family.</text>
</comment>
<organism>
    <name type="scientific">Bos taurus</name>
    <name type="common">Bovine</name>
    <dbReference type="NCBI Taxonomy" id="9913"/>
    <lineage>
        <taxon>Eukaryota</taxon>
        <taxon>Metazoa</taxon>
        <taxon>Chordata</taxon>
        <taxon>Craniata</taxon>
        <taxon>Vertebrata</taxon>
        <taxon>Euteleostomi</taxon>
        <taxon>Mammalia</taxon>
        <taxon>Eutheria</taxon>
        <taxon>Laurasiatheria</taxon>
        <taxon>Artiodactyla</taxon>
        <taxon>Ruminantia</taxon>
        <taxon>Pecora</taxon>
        <taxon>Bovidae</taxon>
        <taxon>Bovinae</taxon>
        <taxon>Bos</taxon>
    </lineage>
</organism>
<keyword id="KW-0472">Membrane</keyword>
<keyword id="KW-0496">Mitochondrion</keyword>
<keyword id="KW-0999">Mitochondrion inner membrane</keyword>
<keyword id="KW-1185">Reference proteome</keyword>
<keyword id="KW-0812">Transmembrane</keyword>
<keyword id="KW-1133">Transmembrane helix</keyword>
<keyword id="KW-0813">Transport</keyword>
<reference key="1">
    <citation type="submission" date="2006-01" db="EMBL/GenBank/DDBJ databases">
        <authorList>
            <consortium name="NIH - Mammalian Gene Collection (MGC) project"/>
        </authorList>
    </citation>
    <scope>NUCLEOTIDE SEQUENCE [LARGE SCALE MRNA]</scope>
    <source>
        <strain>Hereford</strain>
        <tissue>Testis</tissue>
    </source>
</reference>
<accession>Q2M2T3</accession>
<proteinExistence type="evidence at transcript level"/>
<sequence length="181" mass="19167">MAAVVALCRKAMETVKTKEFRDYLASTHFWGPVANWGLPLAAFRDMRASPDIISGRMTTALIFYSMAFMRFAYRVQPRNLLLMACHGTNIVAQSMQAGRYLNYHYGGGTTAATTAAVSAASATSTGSVDSSATSTGSVDSSATSTGSVDSSAATTPAAEDPVAHSNCQEITCCYLVTWDCD</sequence>
<feature type="chain" id="PRO_0000350553" description="Mitochondrial pyruvate carrier-like protein">
    <location>
        <begin position="1"/>
        <end position="181"/>
    </location>
</feature>
<feature type="transmembrane region" description="Helical" evidence="4">
    <location>
        <begin position="23"/>
        <end position="42"/>
    </location>
</feature>
<feature type="transmembrane region" description="Helical" evidence="2">
    <location>
        <begin position="52"/>
        <end position="74"/>
    </location>
</feature>
<feature type="region of interest" description="Disordered" evidence="3">
    <location>
        <begin position="125"/>
        <end position="154"/>
    </location>
</feature>
<dbReference type="EMBL" id="BC111647">
    <property type="protein sequence ID" value="AAI11648.1"/>
    <property type="molecule type" value="mRNA"/>
</dbReference>
<dbReference type="RefSeq" id="NP_001069277.1">
    <property type="nucleotide sequence ID" value="NM_001075809.2"/>
</dbReference>
<dbReference type="FunCoup" id="Q2M2T3">
    <property type="interactions" value="1025"/>
</dbReference>
<dbReference type="STRING" id="9913.ENSBTAP00000015642"/>
<dbReference type="PaxDb" id="9913-ENSBTAP00000015642"/>
<dbReference type="GeneID" id="520682"/>
<dbReference type="KEGG" id="bta:520682"/>
<dbReference type="CTD" id="347411"/>
<dbReference type="eggNOG" id="KOG1590">
    <property type="taxonomic scope" value="Eukaryota"/>
</dbReference>
<dbReference type="InParanoid" id="Q2M2T3"/>
<dbReference type="OrthoDB" id="1697690at2759"/>
<dbReference type="Proteomes" id="UP000009136">
    <property type="component" value="Unplaced"/>
</dbReference>
<dbReference type="GO" id="GO:0005743">
    <property type="term" value="C:mitochondrial inner membrane"/>
    <property type="evidence" value="ECO:0000318"/>
    <property type="project" value="GO_Central"/>
</dbReference>
<dbReference type="GO" id="GO:0050833">
    <property type="term" value="F:pyruvate transmembrane transporter activity"/>
    <property type="evidence" value="ECO:0000318"/>
    <property type="project" value="GO_Central"/>
</dbReference>
<dbReference type="GO" id="GO:0006850">
    <property type="term" value="P:mitochondrial pyruvate transmembrane transport"/>
    <property type="evidence" value="ECO:0000318"/>
    <property type="project" value="GO_Central"/>
</dbReference>
<dbReference type="InterPro" id="IPR005336">
    <property type="entry name" value="MPC"/>
</dbReference>
<dbReference type="PANTHER" id="PTHR14154">
    <property type="entry name" value="UPF0041 BRAIN PROTEIN 44-RELATED"/>
    <property type="match status" value="1"/>
</dbReference>
<dbReference type="Pfam" id="PF03650">
    <property type="entry name" value="MPC"/>
    <property type="match status" value="1"/>
</dbReference>